<evidence type="ECO:0000250" key="1">
    <source>
        <dbReference type="UniProtKB" id="Q5JIZ5"/>
    </source>
</evidence>
<evidence type="ECO:0000250" key="2">
    <source>
        <dbReference type="UniProtKB" id="Q9P8G3"/>
    </source>
</evidence>
<evidence type="ECO:0000250" key="3">
    <source>
        <dbReference type="UniProtKB" id="Q9Y749"/>
    </source>
</evidence>
<evidence type="ECO:0000255" key="4"/>
<evidence type="ECO:0000255" key="5">
    <source>
        <dbReference type="PROSITE-ProRule" id="PRU00498"/>
    </source>
</evidence>
<evidence type="ECO:0000255" key="6">
    <source>
        <dbReference type="PROSITE-ProRule" id="PRU01240"/>
    </source>
</evidence>
<evidence type="ECO:0000269" key="7">
    <source>
    </source>
</evidence>
<evidence type="ECO:0000269" key="8">
    <source>
    </source>
</evidence>
<evidence type="ECO:0000269" key="9">
    <source>
    </source>
</evidence>
<evidence type="ECO:0000303" key="10">
    <source>
    </source>
</evidence>
<evidence type="ECO:0000303" key="11">
    <source>
    </source>
</evidence>
<evidence type="ECO:0000303" key="12">
    <source>
    </source>
</evidence>
<evidence type="ECO:0000305" key="13"/>
<evidence type="ECO:0000305" key="14">
    <source>
    </source>
</evidence>
<feature type="signal peptide" evidence="4">
    <location>
        <begin position="1"/>
        <end position="16"/>
    </location>
</feature>
<feature type="propeptide" id="PRO_0000446668" description="Removed in mature form" evidence="4 14">
    <location>
        <begin position="17"/>
        <end position="136"/>
    </location>
</feature>
<feature type="chain" id="PRO_5004327177" description="Subtilisin-like serine protease Pen ch 18" evidence="14">
    <location>
        <begin position="137"/>
        <end position="453"/>
    </location>
</feature>
<feature type="propeptide" id="PRO_0000446669" description="Removed in mature form" evidence="13">
    <location>
        <begin position="454"/>
        <end position="494"/>
    </location>
</feature>
<feature type="domain" description="Inhibitor I9" evidence="4">
    <location>
        <begin position="43"/>
        <end position="136"/>
    </location>
</feature>
<feature type="domain" description="Peptidase S8" evidence="6">
    <location>
        <begin position="146"/>
        <end position="448"/>
    </location>
</feature>
<feature type="region of interest" description="IgE-binding" evidence="2">
    <location>
        <begin position="180"/>
        <end position="198"/>
    </location>
</feature>
<feature type="region of interest" description="IgE-binding" evidence="8">
    <location>
        <begin position="209"/>
        <end position="231"/>
    </location>
</feature>
<feature type="active site" description="Charge relay system" evidence="6">
    <location>
        <position position="182"/>
    </location>
</feature>
<feature type="active site" description="Charge relay system" evidence="6">
    <location>
        <position position="214"/>
    </location>
</feature>
<feature type="active site" description="Charge relay system" evidence="6">
    <location>
        <position position="376"/>
    </location>
</feature>
<feature type="site" description="Important for catalytic activity" evidence="1">
    <location>
        <position position="311"/>
    </location>
</feature>
<feature type="glycosylation site" description="N-linked (GlcNAc...) asparagine" evidence="5">
    <location>
        <position position="244"/>
    </location>
</feature>
<feature type="glycosylation site" description="N-linked (GlcNAc...) asparagine" evidence="5">
    <location>
        <position position="280"/>
    </location>
</feature>
<feature type="glycosylation site" description="N-linked (GlcNAc...) asparagine" evidence="5">
    <location>
        <position position="443"/>
    </location>
</feature>
<feature type="mutagenesis site" description="Significantly reduced IgE-binding." evidence="9">
    <original>K</original>
    <variation>A</variation>
    <location>
        <position position="225"/>
    </location>
</feature>
<feature type="mutagenesis site" description="Significantly reduced IgE-binding." evidence="9">
    <original>K</original>
    <variation>A</variation>
    <location>
        <position position="226"/>
    </location>
</feature>
<feature type="mutagenesis site" description="Significantly reduced IgE-binding." evidence="9">
    <original>F</original>
    <variation>A</variation>
    <location>
        <position position="227"/>
    </location>
</feature>
<comment type="function">
    <text evidence="3">Serine protease.</text>
</comment>
<comment type="allergen">
    <text evidence="7 8 9">Causes an allergic reaction in human. Binds to IgE of patients with bronchial asthma (PubMed:10231324, PubMed:14510716, PubMed:18760997). Binds to IgE in 24% of the 41 patients tested (PubMed:14510716).</text>
</comment>
<comment type="similarity">
    <text evidence="13">Belongs to the peptidase S8 family.</text>
</comment>
<reference key="1">
    <citation type="journal article" date="2003" name="Allergy">
        <title>Molecular and immunological characterization of Pen ch 18, the vacuolar serine protease major allergen of Penicillium chrysogenum.</title>
        <authorList>
            <person name="Shen H.D."/>
            <person name="Chou H."/>
            <person name="Tam M.F."/>
            <person name="Chang C.Y."/>
            <person name="Lai H.Y."/>
            <person name="Wang S.R."/>
        </authorList>
    </citation>
    <scope>NUCLEOTIDE SEQUENCE [MRNA]</scope>
    <scope>ALLERGEN</scope>
    <scope>REGION</scope>
    <source>
        <strain>ATCC 9179 / BCRC 30568 / CBS 197.46 / NRRL 832 / QM 940</strain>
    </source>
</reference>
<reference key="2">
    <citation type="journal article" date="1999" name="Clin. Exp. Allergy">
        <title>Characterization of allergens from Penicillium oxalicum and P. notatum by immunoblotting and N-terminal amino acid sequence analysis.</title>
        <authorList>
            <person name="Shen H.D."/>
            <person name="Lin W.L."/>
            <person name="Tam M.F."/>
            <person name="Wang S.R."/>
            <person name="Tzean S.S."/>
            <person name="Huang M.H."/>
            <person name="Han S.H."/>
        </authorList>
    </citation>
    <scope>PROTEIN SEQUENCE OF 137-156 AND 168-182</scope>
    <scope>ALLERGEN</scope>
    <source>
        <strain>ATCC 9179 / BCRC 30568 / CBS 197.46 / NRRL 832 / QM 940</strain>
    </source>
</reference>
<reference key="3">
    <citation type="journal article" date="2008" name="Biochem. Biophys. Res. Commun.">
        <title>Lys89, Lys90, and Phe91 are critical core amino acid residues of the Pen ch 18 major fungal allergen recognized by human IgE antibodies.</title>
        <authorList>
            <person name="Cheng T.T."/>
            <person name="Tam M.F."/>
            <person name="Chou H."/>
            <person name="Tai H.Y."/>
            <person name="Shen H.D."/>
        </authorList>
    </citation>
    <scope>3D-STRUCTURE MODELING</scope>
    <scope>ALLERGEN</scope>
    <scope>MUTAGENESIS OF LYS-225; LYS-226 AND PHE-227</scope>
</reference>
<organism>
    <name type="scientific">Penicillium rubens</name>
    <dbReference type="NCBI Taxonomy" id="1108849"/>
    <lineage>
        <taxon>Eukaryota</taxon>
        <taxon>Fungi</taxon>
        <taxon>Dikarya</taxon>
        <taxon>Ascomycota</taxon>
        <taxon>Pezizomycotina</taxon>
        <taxon>Eurotiomycetes</taxon>
        <taxon>Eurotiomycetidae</taxon>
        <taxon>Eurotiales</taxon>
        <taxon>Aspergillaceae</taxon>
        <taxon>Penicillium</taxon>
        <taxon>Penicillium chrysogenum species complex</taxon>
    </lineage>
</organism>
<keyword id="KW-0020">Allergen</keyword>
<keyword id="KW-0903">Direct protein sequencing</keyword>
<keyword id="KW-0325">Glycoprotein</keyword>
<keyword id="KW-0378">Hydrolase</keyword>
<keyword id="KW-0389">IgE-binding protein</keyword>
<keyword id="KW-0645">Protease</keyword>
<keyword id="KW-0720">Serine protease</keyword>
<keyword id="KW-0732">Signal</keyword>
<keyword id="KW-0865">Zymogen</keyword>
<name>PCH18_PENRB</name>
<sequence length="494" mass="52309">MKGFLSLTLLPLLVAASPVAVNSIHNDAAPILSSMTSKDIPDSYIVVFKKHVDPSSASAHQSWLQEVHTAHTGRMELKKRSLFGFDFEAFMGLKHTFHIAGSLLGYAGHFHEDVIEQIRRHPDVDYIEKDSEVRTMSEGSVEKNAPWGLARISHRESLSFGNFNKYLYAEEGGEGVDAYVIDTGANVKHVDFEGRANWGKTIPQGDADEDGNGHGTHCSGTIAGKKFGVAKKANVYAVKVLRSNGSGTMSDVVKGVEWAAEAHIKKSKKGDKKFKGSVANMSLGGGSSRTLDLAVNAAVDAGIHFAVAAGNDNADACNYSPAAAEKAITVGASTLADERAYFSNYGKCTDIFAPGLNILSTWVGSDHATNTISGTSMASPHIAGLLAYYVSLAPAKDSAYAVADVTPKQLKAALISVATEGTLTDIPSDTPNLLAWNGGGSANYTKILADGGYKAHNAETTVEDRIGGIIDSAEKAFHKELGAIYSEIKDAVSA</sequence>
<accession>P9WEW5</accession>
<accession>Q9HF04</accession>
<dbReference type="EC" id="3.4.21.-" evidence="3"/>
<dbReference type="EMBL" id="AF263454">
    <property type="protein sequence ID" value="AAG44693.2"/>
    <property type="molecule type" value="mRNA"/>
</dbReference>
<dbReference type="SMR" id="P9WEW5"/>
<dbReference type="OMA" id="RHPDVDY"/>
<dbReference type="GO" id="GO:0019863">
    <property type="term" value="F:IgE binding"/>
    <property type="evidence" value="ECO:0007669"/>
    <property type="project" value="UniProtKB-KW"/>
</dbReference>
<dbReference type="GO" id="GO:0004252">
    <property type="term" value="F:serine-type endopeptidase activity"/>
    <property type="evidence" value="ECO:0007669"/>
    <property type="project" value="InterPro"/>
</dbReference>
<dbReference type="GO" id="GO:0006508">
    <property type="term" value="P:proteolysis"/>
    <property type="evidence" value="ECO:0007669"/>
    <property type="project" value="UniProtKB-KW"/>
</dbReference>
<dbReference type="CDD" id="cd04077">
    <property type="entry name" value="Peptidases_S8_PCSK9_ProteinaseK_like"/>
    <property type="match status" value="1"/>
</dbReference>
<dbReference type="FunFam" id="3.30.70.80:FF:000006">
    <property type="entry name" value="Autophagic serine protease Alp2"/>
    <property type="match status" value="1"/>
</dbReference>
<dbReference type="FunFam" id="3.40.50.200:FF:000007">
    <property type="entry name" value="Subtilisin-like serine protease"/>
    <property type="match status" value="1"/>
</dbReference>
<dbReference type="Gene3D" id="3.30.70.80">
    <property type="entry name" value="Peptidase S8 propeptide/proteinase inhibitor I9"/>
    <property type="match status" value="1"/>
</dbReference>
<dbReference type="Gene3D" id="3.40.50.200">
    <property type="entry name" value="Peptidase S8/S53 domain"/>
    <property type="match status" value="1"/>
</dbReference>
<dbReference type="InterPro" id="IPR034193">
    <property type="entry name" value="PCSK9_ProteinaseK-like"/>
</dbReference>
<dbReference type="InterPro" id="IPR000209">
    <property type="entry name" value="Peptidase_S8/S53_dom"/>
</dbReference>
<dbReference type="InterPro" id="IPR036852">
    <property type="entry name" value="Peptidase_S8/S53_dom_sf"/>
</dbReference>
<dbReference type="InterPro" id="IPR022398">
    <property type="entry name" value="Peptidase_S8_His-AS"/>
</dbReference>
<dbReference type="InterPro" id="IPR023828">
    <property type="entry name" value="Peptidase_S8_Ser-AS"/>
</dbReference>
<dbReference type="InterPro" id="IPR050131">
    <property type="entry name" value="Peptidase_S8_subtilisin-like"/>
</dbReference>
<dbReference type="InterPro" id="IPR015500">
    <property type="entry name" value="Peptidase_S8_subtilisin-rel"/>
</dbReference>
<dbReference type="InterPro" id="IPR010259">
    <property type="entry name" value="S8pro/Inhibitor_I9"/>
</dbReference>
<dbReference type="InterPro" id="IPR037045">
    <property type="entry name" value="S8pro/Inhibitor_I9_sf"/>
</dbReference>
<dbReference type="PANTHER" id="PTHR43806:SF11">
    <property type="entry name" value="CEREVISIN-RELATED"/>
    <property type="match status" value="1"/>
</dbReference>
<dbReference type="PANTHER" id="PTHR43806">
    <property type="entry name" value="PEPTIDASE S8"/>
    <property type="match status" value="1"/>
</dbReference>
<dbReference type="Pfam" id="PF05922">
    <property type="entry name" value="Inhibitor_I9"/>
    <property type="match status" value="1"/>
</dbReference>
<dbReference type="Pfam" id="PF00082">
    <property type="entry name" value="Peptidase_S8"/>
    <property type="match status" value="1"/>
</dbReference>
<dbReference type="PRINTS" id="PR00723">
    <property type="entry name" value="SUBTILISIN"/>
</dbReference>
<dbReference type="SUPFAM" id="SSF54897">
    <property type="entry name" value="Protease propeptides/inhibitors"/>
    <property type="match status" value="1"/>
</dbReference>
<dbReference type="SUPFAM" id="SSF52743">
    <property type="entry name" value="Subtilisin-like"/>
    <property type="match status" value="1"/>
</dbReference>
<dbReference type="PROSITE" id="PS51892">
    <property type="entry name" value="SUBTILASE"/>
    <property type="match status" value="1"/>
</dbReference>
<dbReference type="PROSITE" id="PS00137">
    <property type="entry name" value="SUBTILASE_HIS"/>
    <property type="match status" value="1"/>
</dbReference>
<dbReference type="PROSITE" id="PS00138">
    <property type="entry name" value="SUBTILASE_SER"/>
    <property type="match status" value="1"/>
</dbReference>
<proteinExistence type="evidence at protein level"/>
<protein>
    <recommendedName>
        <fullName evidence="13">Subtilisin-like serine protease Pen ch 18</fullName>
        <ecNumber evidence="3">3.4.21.-</ecNumber>
    </recommendedName>
    <alternativeName>
        <fullName evidence="10 11 12">Vacuolar serine protease</fullName>
    </alternativeName>
    <allergenName evidence="11 12">Pen ch 18</allergenName>
</protein>